<keyword id="KW-0030">Aminoacyl-tRNA synthetase</keyword>
<keyword id="KW-0067">ATP-binding</keyword>
<keyword id="KW-0963">Cytoplasm</keyword>
<keyword id="KW-0436">Ligase</keyword>
<keyword id="KW-0547">Nucleotide-binding</keyword>
<keyword id="KW-0648">Protein biosynthesis</keyword>
<keyword id="KW-1185">Reference proteome</keyword>
<name>SYGA_SYNS9</name>
<organism>
    <name type="scientific">Synechococcus sp. (strain CC9902)</name>
    <dbReference type="NCBI Taxonomy" id="316279"/>
    <lineage>
        <taxon>Bacteria</taxon>
        <taxon>Bacillati</taxon>
        <taxon>Cyanobacteriota</taxon>
        <taxon>Cyanophyceae</taxon>
        <taxon>Synechococcales</taxon>
        <taxon>Synechococcaceae</taxon>
        <taxon>Synechococcus</taxon>
    </lineage>
</organism>
<reference key="1">
    <citation type="submission" date="2005-08" db="EMBL/GenBank/DDBJ databases">
        <title>Complete sequence of Synechococcus sp. CC9902.</title>
        <authorList>
            <person name="Copeland A."/>
            <person name="Lucas S."/>
            <person name="Lapidus A."/>
            <person name="Barry K."/>
            <person name="Detter J.C."/>
            <person name="Glavina T."/>
            <person name="Hammon N."/>
            <person name="Israni S."/>
            <person name="Pitluck S."/>
            <person name="Martinez M."/>
            <person name="Schmutz J."/>
            <person name="Larimer F."/>
            <person name="Land M."/>
            <person name="Kyrpides N."/>
            <person name="Ivanova N."/>
            <person name="Richardson P."/>
        </authorList>
    </citation>
    <scope>NUCLEOTIDE SEQUENCE [LARGE SCALE GENOMIC DNA]</scope>
    <source>
        <strain>CC9902</strain>
    </source>
</reference>
<evidence type="ECO:0000255" key="1">
    <source>
        <dbReference type="HAMAP-Rule" id="MF_00254"/>
    </source>
</evidence>
<feature type="chain" id="PRO_1000047519" description="Glycine--tRNA ligase alpha subunit">
    <location>
        <begin position="1"/>
        <end position="290"/>
    </location>
</feature>
<proteinExistence type="inferred from homology"/>
<gene>
    <name evidence="1" type="primary">glyQ</name>
    <name type="ordered locus">Syncc9902_1561</name>
</gene>
<sequence length="290" mass="32902">MHFQDIIGTLNSFWANQGCLLLQPYDTEKGAGTMSPHTVLRAIGPEPWAVAYPEPCRRPTDGRYGDNPNRAQHYFQYQVLIKPSPDAIQETYLASLEALGIKAADHDIRFVEDNWESPTLGAWGVGWEVWLDGMEVTQFTYFQQCGGLDCKPVSIEITYGLERLAMYLQDVESIWDLSWNADRKYGDIWLPFEKGQCKFNFEASNPDRLKQLFAIYEAEASDLIHQQLPAPALDFVLKCSHTFNLLEARGVISVTERTATIGRIRNLARKVAEAWLVEREALGFPLLPSN</sequence>
<accession>Q3AWZ4</accession>
<protein>
    <recommendedName>
        <fullName evidence="1">Glycine--tRNA ligase alpha subunit</fullName>
        <ecNumber evidence="1">6.1.1.14</ecNumber>
    </recommendedName>
    <alternativeName>
        <fullName evidence="1">Glycyl-tRNA synthetase alpha subunit</fullName>
        <shortName evidence="1">GlyRS</shortName>
    </alternativeName>
</protein>
<comment type="catalytic activity">
    <reaction evidence="1">
        <text>tRNA(Gly) + glycine + ATP = glycyl-tRNA(Gly) + AMP + diphosphate</text>
        <dbReference type="Rhea" id="RHEA:16013"/>
        <dbReference type="Rhea" id="RHEA-COMP:9664"/>
        <dbReference type="Rhea" id="RHEA-COMP:9683"/>
        <dbReference type="ChEBI" id="CHEBI:30616"/>
        <dbReference type="ChEBI" id="CHEBI:33019"/>
        <dbReference type="ChEBI" id="CHEBI:57305"/>
        <dbReference type="ChEBI" id="CHEBI:78442"/>
        <dbReference type="ChEBI" id="CHEBI:78522"/>
        <dbReference type="ChEBI" id="CHEBI:456215"/>
        <dbReference type="EC" id="6.1.1.14"/>
    </reaction>
</comment>
<comment type="subunit">
    <text evidence="1">Tetramer of two alpha and two beta subunits.</text>
</comment>
<comment type="subcellular location">
    <subcellularLocation>
        <location evidence="1">Cytoplasm</location>
    </subcellularLocation>
</comment>
<comment type="similarity">
    <text evidence="1">Belongs to the class-II aminoacyl-tRNA synthetase family.</text>
</comment>
<dbReference type="EC" id="6.1.1.14" evidence="1"/>
<dbReference type="EMBL" id="CP000097">
    <property type="protein sequence ID" value="ABB26519.1"/>
    <property type="molecule type" value="Genomic_DNA"/>
</dbReference>
<dbReference type="RefSeq" id="WP_011360337.1">
    <property type="nucleotide sequence ID" value="NC_007513.1"/>
</dbReference>
<dbReference type="SMR" id="Q3AWZ4"/>
<dbReference type="STRING" id="316279.Syncc9902_1561"/>
<dbReference type="KEGG" id="sye:Syncc9902_1561"/>
<dbReference type="eggNOG" id="COG0752">
    <property type="taxonomic scope" value="Bacteria"/>
</dbReference>
<dbReference type="HOGENOM" id="CLU_057066_1_0_3"/>
<dbReference type="OrthoDB" id="9802183at2"/>
<dbReference type="Proteomes" id="UP000002712">
    <property type="component" value="Chromosome"/>
</dbReference>
<dbReference type="GO" id="GO:0005829">
    <property type="term" value="C:cytosol"/>
    <property type="evidence" value="ECO:0007669"/>
    <property type="project" value="TreeGrafter"/>
</dbReference>
<dbReference type="GO" id="GO:0005524">
    <property type="term" value="F:ATP binding"/>
    <property type="evidence" value="ECO:0007669"/>
    <property type="project" value="UniProtKB-UniRule"/>
</dbReference>
<dbReference type="GO" id="GO:0004820">
    <property type="term" value="F:glycine-tRNA ligase activity"/>
    <property type="evidence" value="ECO:0007669"/>
    <property type="project" value="UniProtKB-UniRule"/>
</dbReference>
<dbReference type="GO" id="GO:0006426">
    <property type="term" value="P:glycyl-tRNA aminoacylation"/>
    <property type="evidence" value="ECO:0007669"/>
    <property type="project" value="UniProtKB-UniRule"/>
</dbReference>
<dbReference type="CDD" id="cd00733">
    <property type="entry name" value="GlyRS_alpha_core"/>
    <property type="match status" value="1"/>
</dbReference>
<dbReference type="FunFam" id="3.30.930.10:FF:000006">
    <property type="entry name" value="Glycine--tRNA ligase alpha subunit"/>
    <property type="match status" value="1"/>
</dbReference>
<dbReference type="Gene3D" id="3.30.930.10">
    <property type="entry name" value="Bira Bifunctional Protein, Domain 2"/>
    <property type="match status" value="1"/>
</dbReference>
<dbReference type="Gene3D" id="1.20.58.180">
    <property type="entry name" value="Class II aaRS and biotin synthetases, domain 2"/>
    <property type="match status" value="1"/>
</dbReference>
<dbReference type="HAMAP" id="MF_00254">
    <property type="entry name" value="Gly_tRNA_synth_alpha"/>
    <property type="match status" value="1"/>
</dbReference>
<dbReference type="InterPro" id="IPR045864">
    <property type="entry name" value="aa-tRNA-synth_II/BPL/LPL"/>
</dbReference>
<dbReference type="InterPro" id="IPR006194">
    <property type="entry name" value="Gly-tRNA-synth_heterodimer"/>
</dbReference>
<dbReference type="InterPro" id="IPR002310">
    <property type="entry name" value="Gly-tRNA_ligase_asu"/>
</dbReference>
<dbReference type="NCBIfam" id="TIGR00388">
    <property type="entry name" value="glyQ"/>
    <property type="match status" value="1"/>
</dbReference>
<dbReference type="NCBIfam" id="NF006827">
    <property type="entry name" value="PRK09348.1"/>
    <property type="match status" value="1"/>
</dbReference>
<dbReference type="PANTHER" id="PTHR30075:SF2">
    <property type="entry name" value="GLYCINE--TRNA LIGASE, CHLOROPLASTIC_MITOCHONDRIAL 2"/>
    <property type="match status" value="1"/>
</dbReference>
<dbReference type="PANTHER" id="PTHR30075">
    <property type="entry name" value="GLYCYL-TRNA SYNTHETASE"/>
    <property type="match status" value="1"/>
</dbReference>
<dbReference type="Pfam" id="PF02091">
    <property type="entry name" value="tRNA-synt_2e"/>
    <property type="match status" value="1"/>
</dbReference>
<dbReference type="PRINTS" id="PR01044">
    <property type="entry name" value="TRNASYNTHGA"/>
</dbReference>
<dbReference type="SUPFAM" id="SSF55681">
    <property type="entry name" value="Class II aaRS and biotin synthetases"/>
    <property type="match status" value="1"/>
</dbReference>
<dbReference type="PROSITE" id="PS50861">
    <property type="entry name" value="AA_TRNA_LIGASE_II_GLYAB"/>
    <property type="match status" value="1"/>
</dbReference>